<organism>
    <name type="scientific">Gallus gallus</name>
    <name type="common">Chicken</name>
    <dbReference type="NCBI Taxonomy" id="9031"/>
    <lineage>
        <taxon>Eukaryota</taxon>
        <taxon>Metazoa</taxon>
        <taxon>Chordata</taxon>
        <taxon>Craniata</taxon>
        <taxon>Vertebrata</taxon>
        <taxon>Euteleostomi</taxon>
        <taxon>Archelosauria</taxon>
        <taxon>Archosauria</taxon>
        <taxon>Dinosauria</taxon>
        <taxon>Saurischia</taxon>
        <taxon>Theropoda</taxon>
        <taxon>Coelurosauria</taxon>
        <taxon>Aves</taxon>
        <taxon>Neognathae</taxon>
        <taxon>Galloanserae</taxon>
        <taxon>Galliformes</taxon>
        <taxon>Phasianidae</taxon>
        <taxon>Phasianinae</taxon>
        <taxon>Gallus</taxon>
    </lineage>
</organism>
<sequence length="429" mass="49318">MALRPVVLRRAPAHSRGILTRPGPPRPRGPLPRTPWTTRGPPPDQLARVVERRPVREQVELDTVTYAGRQYFVPGLARPRFPPWDRGWREPWHSPGPRYEDMPLRKERGCFICHQRVRMLEGVRQAQWLTKTKLVQGLPAKVLSIAENPAYQLQEQEEAVHRAVAHARLWETTEVSPRREKYCPVLFEDLIHLCRSMSVKYPSLARRMLARNYRIAATWERESTLLQIRGLNGILMNSMTPIPPVASKEEILATKDHVLETFYPISPTIDLQEVNVYQELNDTGFKDGYPYSHPHTLYFLESANKRPNRFRPEQLRAKMLMFAFGNALAKAKVLYGNDPQVLEQPIVVQSVGTDGQLFQFLVFQLNTTDLVSNDGIKNLVWIDSDQNLYESAQCVPEVKKRVVTKPTGIYGLQPETFKKFLALYLHGTV</sequence>
<feature type="transit peptide" description="Mitochondrion" evidence="1">
    <location>
        <begin position="1"/>
        <end position="29"/>
    </location>
</feature>
<feature type="chain" id="PRO_0000045908" description="Large ribosomal subunit protein mL37">
    <location>
        <begin position="30"/>
        <end position="429"/>
    </location>
</feature>
<feature type="region of interest" description="Disordered" evidence="3">
    <location>
        <begin position="12"/>
        <end position="45"/>
    </location>
</feature>
<feature type="compositionally biased region" description="Pro residues" evidence="3">
    <location>
        <begin position="22"/>
        <end position="33"/>
    </location>
</feature>
<accession>Q5ZI69</accession>
<reference key="1">
    <citation type="journal article" date="2005" name="Genome Biol.">
        <title>Full-length cDNAs from chicken bursal lymphocytes to facilitate gene function analysis.</title>
        <authorList>
            <person name="Caldwell R.B."/>
            <person name="Kierzek A.M."/>
            <person name="Arakawa H."/>
            <person name="Bezzubov Y."/>
            <person name="Zaim J."/>
            <person name="Fiedler P."/>
            <person name="Kutter S."/>
            <person name="Blagodatski A."/>
            <person name="Kostovska D."/>
            <person name="Koter M."/>
            <person name="Plachy J."/>
            <person name="Carninci P."/>
            <person name="Hayashizaki Y."/>
            <person name="Buerstedde J.-M."/>
        </authorList>
    </citation>
    <scope>NUCLEOTIDE SEQUENCE [LARGE SCALE MRNA]</scope>
    <source>
        <strain>CB</strain>
        <tissue>Bursa of Fabricius</tissue>
    </source>
</reference>
<proteinExistence type="evidence at transcript level"/>
<keyword id="KW-0496">Mitochondrion</keyword>
<keyword id="KW-1185">Reference proteome</keyword>
<keyword id="KW-0687">Ribonucleoprotein</keyword>
<keyword id="KW-0689">Ribosomal protein</keyword>
<keyword id="KW-0809">Transit peptide</keyword>
<gene>
    <name type="primary">MRPL37</name>
    <name type="ORF">RCJMB04_29m8</name>
</gene>
<comment type="subunit">
    <text evidence="2">Component of the mitochondrial ribosome large subunit (39S) which comprises a 16S rRNA and about 50 distinct proteins.</text>
</comment>
<comment type="subcellular location">
    <subcellularLocation>
        <location evidence="2">Mitochondrion</location>
    </subcellularLocation>
</comment>
<comment type="similarity">
    <text evidence="4">Belongs to the mitochondrion-specific ribosomal protein mL37 family.</text>
</comment>
<comment type="sequence caution" evidence="4">
    <conflict type="erroneous initiation">
        <sequence resource="EMBL-CDS" id="CAG32574"/>
    </conflict>
</comment>
<name>RM37_CHICK</name>
<dbReference type="EMBL" id="AJ720915">
    <property type="protein sequence ID" value="CAG32574.1"/>
    <property type="status" value="ALT_INIT"/>
    <property type="molecule type" value="mRNA"/>
</dbReference>
<dbReference type="RefSeq" id="NP_001074974.1">
    <property type="nucleotide sequence ID" value="NM_001081505.1"/>
</dbReference>
<dbReference type="SMR" id="Q5ZI69"/>
<dbReference type="FunCoup" id="Q5ZI69">
    <property type="interactions" value="925"/>
</dbReference>
<dbReference type="STRING" id="9031.ENSGALP00000067207"/>
<dbReference type="PaxDb" id="9031-ENSGALP00000037366"/>
<dbReference type="GeneID" id="772313"/>
<dbReference type="KEGG" id="gga:772313"/>
<dbReference type="CTD" id="51253"/>
<dbReference type="VEuPathDB" id="HostDB:geneid_772313"/>
<dbReference type="eggNOG" id="ENOG502QQAQ">
    <property type="taxonomic scope" value="Eukaryota"/>
</dbReference>
<dbReference type="InParanoid" id="Q5ZI69"/>
<dbReference type="OrthoDB" id="5835618at2759"/>
<dbReference type="PhylomeDB" id="Q5ZI69"/>
<dbReference type="PRO" id="PR:Q5ZI69"/>
<dbReference type="Proteomes" id="UP000000539">
    <property type="component" value="Unassembled WGS sequence"/>
</dbReference>
<dbReference type="GO" id="GO:0005762">
    <property type="term" value="C:mitochondrial large ribosomal subunit"/>
    <property type="evidence" value="ECO:0000250"/>
    <property type="project" value="UniProtKB"/>
</dbReference>
<dbReference type="GO" id="GO:0005739">
    <property type="term" value="C:mitochondrion"/>
    <property type="evidence" value="ECO:0000318"/>
    <property type="project" value="GO_Central"/>
</dbReference>
<dbReference type="GO" id="GO:0003735">
    <property type="term" value="F:structural constituent of ribosome"/>
    <property type="evidence" value="ECO:0007669"/>
    <property type="project" value="InterPro"/>
</dbReference>
<dbReference type="GO" id="GO:0006412">
    <property type="term" value="P:translation"/>
    <property type="evidence" value="ECO:0007669"/>
    <property type="project" value="InterPro"/>
</dbReference>
<dbReference type="InterPro" id="IPR052482">
    <property type="entry name" value="mtLSU_mL37"/>
</dbReference>
<dbReference type="InterPro" id="IPR010793">
    <property type="entry name" value="Ribosomal_mL37/mL65"/>
</dbReference>
<dbReference type="PANTHER" id="PTHR15889:SF2">
    <property type="entry name" value="LARGE RIBOSOMAL SUBUNIT PROTEIN ML37"/>
    <property type="match status" value="1"/>
</dbReference>
<dbReference type="PANTHER" id="PTHR15889">
    <property type="entry name" value="MITOCHONDRIAL RIBOSOMAL PROTEIN L37"/>
    <property type="match status" value="1"/>
</dbReference>
<dbReference type="Pfam" id="PF07147">
    <property type="entry name" value="PDCD9"/>
    <property type="match status" value="1"/>
</dbReference>
<evidence type="ECO:0000250" key="1"/>
<evidence type="ECO:0000250" key="2">
    <source>
        <dbReference type="UniProtKB" id="Q9BZE1"/>
    </source>
</evidence>
<evidence type="ECO:0000256" key="3">
    <source>
        <dbReference type="SAM" id="MobiDB-lite"/>
    </source>
</evidence>
<evidence type="ECO:0000305" key="4"/>
<protein>
    <recommendedName>
        <fullName evidence="4">Large ribosomal subunit protein mL37</fullName>
    </recommendedName>
    <alternativeName>
        <fullName>39S ribosomal protein L37, mitochondrial</fullName>
        <shortName>L37mt</shortName>
        <shortName>MRP-L37</shortName>
    </alternativeName>
</protein>